<dbReference type="EC" id="2.4.1.182" evidence="1"/>
<dbReference type="EMBL" id="CU928162">
    <property type="protein sequence ID" value="CAR06407.1"/>
    <property type="molecule type" value="Genomic_DNA"/>
</dbReference>
<dbReference type="RefSeq" id="WP_000139678.1">
    <property type="nucleotide sequence ID" value="NC_011745.1"/>
</dbReference>
<dbReference type="SMR" id="B7MP42"/>
<dbReference type="CAZy" id="GT19">
    <property type="family name" value="Glycosyltransferase Family 19"/>
</dbReference>
<dbReference type="KEGG" id="ecq:ECED1_0188"/>
<dbReference type="HOGENOM" id="CLU_036577_3_0_6"/>
<dbReference type="UniPathway" id="UPA00359">
    <property type="reaction ID" value="UER00481"/>
</dbReference>
<dbReference type="Proteomes" id="UP000000748">
    <property type="component" value="Chromosome"/>
</dbReference>
<dbReference type="GO" id="GO:0016020">
    <property type="term" value="C:membrane"/>
    <property type="evidence" value="ECO:0007669"/>
    <property type="project" value="GOC"/>
</dbReference>
<dbReference type="GO" id="GO:0008915">
    <property type="term" value="F:lipid-A-disaccharide synthase activity"/>
    <property type="evidence" value="ECO:0007669"/>
    <property type="project" value="UniProtKB-UniRule"/>
</dbReference>
<dbReference type="GO" id="GO:0005543">
    <property type="term" value="F:phospholipid binding"/>
    <property type="evidence" value="ECO:0007669"/>
    <property type="project" value="TreeGrafter"/>
</dbReference>
<dbReference type="GO" id="GO:0009245">
    <property type="term" value="P:lipid A biosynthetic process"/>
    <property type="evidence" value="ECO:0007669"/>
    <property type="project" value="UniProtKB-UniRule"/>
</dbReference>
<dbReference type="CDD" id="cd01635">
    <property type="entry name" value="Glycosyltransferase_GTB-type"/>
    <property type="match status" value="1"/>
</dbReference>
<dbReference type="HAMAP" id="MF_00392">
    <property type="entry name" value="LpxB"/>
    <property type="match status" value="1"/>
</dbReference>
<dbReference type="InterPro" id="IPR003835">
    <property type="entry name" value="Glyco_trans_19"/>
</dbReference>
<dbReference type="NCBIfam" id="TIGR00215">
    <property type="entry name" value="lpxB"/>
    <property type="match status" value="1"/>
</dbReference>
<dbReference type="PANTHER" id="PTHR30372">
    <property type="entry name" value="LIPID-A-DISACCHARIDE SYNTHASE"/>
    <property type="match status" value="1"/>
</dbReference>
<dbReference type="PANTHER" id="PTHR30372:SF4">
    <property type="entry name" value="LIPID-A-DISACCHARIDE SYNTHASE, MITOCHONDRIAL-RELATED"/>
    <property type="match status" value="1"/>
</dbReference>
<dbReference type="Pfam" id="PF02684">
    <property type="entry name" value="LpxB"/>
    <property type="match status" value="1"/>
</dbReference>
<dbReference type="SUPFAM" id="SSF53756">
    <property type="entry name" value="UDP-Glycosyltransferase/glycogen phosphorylase"/>
    <property type="match status" value="1"/>
</dbReference>
<proteinExistence type="inferred from homology"/>
<organism>
    <name type="scientific">Escherichia coli O81 (strain ED1a)</name>
    <dbReference type="NCBI Taxonomy" id="585397"/>
    <lineage>
        <taxon>Bacteria</taxon>
        <taxon>Pseudomonadati</taxon>
        <taxon>Pseudomonadota</taxon>
        <taxon>Gammaproteobacteria</taxon>
        <taxon>Enterobacterales</taxon>
        <taxon>Enterobacteriaceae</taxon>
        <taxon>Escherichia</taxon>
    </lineage>
</organism>
<accession>B7MP42</accession>
<reference key="1">
    <citation type="journal article" date="2009" name="PLoS Genet.">
        <title>Organised genome dynamics in the Escherichia coli species results in highly diverse adaptive paths.</title>
        <authorList>
            <person name="Touchon M."/>
            <person name="Hoede C."/>
            <person name="Tenaillon O."/>
            <person name="Barbe V."/>
            <person name="Baeriswyl S."/>
            <person name="Bidet P."/>
            <person name="Bingen E."/>
            <person name="Bonacorsi S."/>
            <person name="Bouchier C."/>
            <person name="Bouvet O."/>
            <person name="Calteau A."/>
            <person name="Chiapello H."/>
            <person name="Clermont O."/>
            <person name="Cruveiller S."/>
            <person name="Danchin A."/>
            <person name="Diard M."/>
            <person name="Dossat C."/>
            <person name="Karoui M.E."/>
            <person name="Frapy E."/>
            <person name="Garry L."/>
            <person name="Ghigo J.M."/>
            <person name="Gilles A.M."/>
            <person name="Johnson J."/>
            <person name="Le Bouguenec C."/>
            <person name="Lescat M."/>
            <person name="Mangenot S."/>
            <person name="Martinez-Jehanne V."/>
            <person name="Matic I."/>
            <person name="Nassif X."/>
            <person name="Oztas S."/>
            <person name="Petit M.A."/>
            <person name="Pichon C."/>
            <person name="Rouy Z."/>
            <person name="Ruf C.S."/>
            <person name="Schneider D."/>
            <person name="Tourret J."/>
            <person name="Vacherie B."/>
            <person name="Vallenet D."/>
            <person name="Medigue C."/>
            <person name="Rocha E.P.C."/>
            <person name="Denamur E."/>
        </authorList>
    </citation>
    <scope>NUCLEOTIDE SEQUENCE [LARGE SCALE GENOMIC DNA]</scope>
    <source>
        <strain>ED1a</strain>
    </source>
</reference>
<gene>
    <name evidence="1" type="primary">lpxB</name>
    <name type="ordered locus">ECED1_0188</name>
</gene>
<feature type="chain" id="PRO_1000191484" description="Lipid-A-disaccharide synthase">
    <location>
        <begin position="1"/>
        <end position="382"/>
    </location>
</feature>
<keyword id="KW-0328">Glycosyltransferase</keyword>
<keyword id="KW-0441">Lipid A biosynthesis</keyword>
<keyword id="KW-0444">Lipid biosynthesis</keyword>
<keyword id="KW-0443">Lipid metabolism</keyword>
<keyword id="KW-0808">Transferase</keyword>
<sequence>MTEQRPLTIALVAGETSGDILGAGLIRALKERVPNARFVGVAGPRMQAEGCEAWYEMEELAVMGIVEVLGRLRRLLHIRADLTKRFGELKPDVFVGIDAPDFNITLEGNLKKQGIKTIHYVSPSVWAWRQKRVFKIGRATDLVLAFLPFEKAFYDKYNVPCRFIGHTMADAMPLDPDKNGARDVLGIPYDAHCLALLPGSRGAEVEMLSADFLKTAQLLRQTYPDLEIVVPLVNAKRREQFERIKAAVAPDLSVHLLDGMGREAMVASDAALLASGTAALECMLAKCPMVVGYRMKPFTFWLAKRLVKTDYVSLPNLLAGRELVKELLQEECEPQKLAAALLPLLANGKTSHAMHDTFRELHQQIRCNADEQAAQAVLELAQ</sequence>
<protein>
    <recommendedName>
        <fullName evidence="1">Lipid-A-disaccharide synthase</fullName>
        <ecNumber evidence="1">2.4.1.182</ecNumber>
    </recommendedName>
</protein>
<name>LPXB_ECO81</name>
<evidence type="ECO:0000255" key="1">
    <source>
        <dbReference type="HAMAP-Rule" id="MF_00392"/>
    </source>
</evidence>
<comment type="function">
    <text evidence="1">Condensation of UDP-2,3-diacylglucosamine and 2,3-diacylglucosamine-1-phosphate to form lipid A disaccharide, a precursor of lipid A, a phosphorylated glycolipid that anchors the lipopolysaccharide to the outer membrane of the cell.</text>
</comment>
<comment type="catalytic activity">
    <reaction evidence="1">
        <text>2-N,3-O-bis[(3R)-3-hydroxytetradecanoyl]-alpha-D-glucosaminyl 1-phosphate + UDP-2-N,3-O-bis[(3R)-3-hydroxytetradecanoyl]-alpha-D-glucosamine = lipid A disaccharide (E. coli) + UDP + H(+)</text>
        <dbReference type="Rhea" id="RHEA:22668"/>
        <dbReference type="ChEBI" id="CHEBI:15378"/>
        <dbReference type="ChEBI" id="CHEBI:57957"/>
        <dbReference type="ChEBI" id="CHEBI:58223"/>
        <dbReference type="ChEBI" id="CHEBI:58466"/>
        <dbReference type="ChEBI" id="CHEBI:78847"/>
    </reaction>
</comment>
<comment type="catalytic activity">
    <reaction evidence="1">
        <text>a lipid X + a UDP-2-N,3-O-bis[(3R)-3-hydroxyacyl]-alpha-D-glucosamine = a lipid A disaccharide + UDP + H(+)</text>
        <dbReference type="Rhea" id="RHEA:67828"/>
        <dbReference type="ChEBI" id="CHEBI:15378"/>
        <dbReference type="ChEBI" id="CHEBI:58223"/>
        <dbReference type="ChEBI" id="CHEBI:137748"/>
        <dbReference type="ChEBI" id="CHEBI:176338"/>
        <dbReference type="ChEBI" id="CHEBI:176343"/>
        <dbReference type="EC" id="2.4.1.182"/>
    </reaction>
</comment>
<comment type="pathway">
    <text evidence="1">Glycolipid biosynthesis; lipid IV(A) biosynthesis; lipid IV(A) from (3R)-3-hydroxytetradecanoyl-[acyl-carrier-protein] and UDP-N-acetyl-alpha-D-glucosamine: step 5/6.</text>
</comment>
<comment type="similarity">
    <text evidence="1">Belongs to the LpxB family.</text>
</comment>